<sequence>MGSQNQGSTTTTSAGNPDSLVTDKVDQKGQVQTSGQNLSDTNYTNLSPNFTPTSDWPNALSFTNKNNAQRAQLFLHGLLGSIPVLVNKSGENNEKFQATDQKWSYTELKSDQTKLNLPAYGEVNGLLNPALVETYFGTTRTSSTANQNSTTVPGIGFKIPEQNNDSKAVLITPGLAWTPQDVGNLVVSGTSFSFQLGGWLVSFTDFVKPRAGYLGLQLTGLDASDATQRALIWAPPALSGLSWQLGQPVGPRGECVGFEGGVGGSSSVRLARIYHHRNRGYLTGAPECFGLSGECGGSECLQAKHELRPNPIH</sequence>
<gene>
    <name type="ordered locus">MPN_202</name>
    <name type="ORF">GT9_orf313</name>
    <name type="ORF">MP629</name>
</gene>
<organism>
    <name type="scientific">Mycoplasma pneumoniae (strain ATCC 29342 / M129 / Subtype 1)</name>
    <name type="common">Mycoplasmoides pneumoniae</name>
    <dbReference type="NCBI Taxonomy" id="272634"/>
    <lineage>
        <taxon>Bacteria</taxon>
        <taxon>Bacillati</taxon>
        <taxon>Mycoplasmatota</taxon>
        <taxon>Mycoplasmoidales</taxon>
        <taxon>Mycoplasmoidaceae</taxon>
        <taxon>Mycoplasmoides</taxon>
    </lineage>
</organism>
<comment type="similarity">
    <text evidence="2">Belongs to the adhesin P1 family.</text>
</comment>
<comment type="caution">
    <text evidence="2">Could be the product of a pseudogene.</text>
</comment>
<reference key="1">
    <citation type="journal article" date="1996" name="Nucleic Acids Res.">
        <title>Sequence analysis of 56 kb from the genome of the bacterium Mycoplasma pneumoniae comprising the dnaA region, the atp operon and a cluster of ribosomal protein genes.</title>
        <authorList>
            <person name="Hilbert H."/>
            <person name="Himmelreich R."/>
            <person name="Plagens H."/>
            <person name="Herrmann R."/>
        </authorList>
    </citation>
    <scope>NUCLEOTIDE SEQUENCE [GENOMIC DNA]</scope>
    <source>
        <strain>ATCC 29342 / M129 / Subtype 1</strain>
    </source>
</reference>
<reference key="2">
    <citation type="journal article" date="1996" name="Nucleic Acids Res.">
        <title>Complete sequence analysis of the genome of the bacterium Mycoplasma pneumoniae.</title>
        <authorList>
            <person name="Himmelreich R."/>
            <person name="Hilbert H."/>
            <person name="Plagens H."/>
            <person name="Pirkl E."/>
            <person name="Li B.-C."/>
            <person name="Herrmann R."/>
        </authorList>
    </citation>
    <scope>NUCLEOTIDE SEQUENCE [LARGE SCALE GENOMIC DNA]</scope>
    <source>
        <strain>ATCC 29342 / M129 / Subtype 1</strain>
    </source>
</reference>
<name>Y202_MYCPN</name>
<accession>Q50286</accession>
<proteinExistence type="uncertain"/>
<protein>
    <recommendedName>
        <fullName>Putative adhesin P1-like protein MPN_202</fullName>
    </recommendedName>
</protein>
<dbReference type="EMBL" id="U34795">
    <property type="protein sequence ID" value="AAC43679.1"/>
    <property type="molecule type" value="Genomic_DNA"/>
</dbReference>
<dbReference type="EMBL" id="U00089">
    <property type="protein sequence ID" value="AAB96277.1"/>
    <property type="molecule type" value="Genomic_DNA"/>
</dbReference>
<dbReference type="PIR" id="S62808">
    <property type="entry name" value="S62808"/>
</dbReference>
<dbReference type="RefSeq" id="NP_109890.1">
    <property type="nucleotide sequence ID" value="NC_000912.1"/>
</dbReference>
<dbReference type="SMR" id="Q50286"/>
<dbReference type="EnsemblBacteria" id="AAB96277">
    <property type="protein sequence ID" value="AAB96277"/>
    <property type="gene ID" value="MPN_202"/>
</dbReference>
<dbReference type="KEGG" id="mpn:MPN_202"/>
<dbReference type="PATRIC" id="fig|272634.6.peg.221"/>
<dbReference type="HOGENOM" id="CLU_077131_0_0_14"/>
<dbReference type="OrthoDB" id="403686at2"/>
<dbReference type="BioCyc" id="MPNE272634:G1GJ3-328-MONOMER"/>
<dbReference type="Proteomes" id="UP000000808">
    <property type="component" value="Chromosome"/>
</dbReference>
<keyword id="KW-1185">Reference proteome</keyword>
<evidence type="ECO:0000256" key="1">
    <source>
        <dbReference type="SAM" id="MobiDB-lite"/>
    </source>
</evidence>
<evidence type="ECO:0000305" key="2"/>
<feature type="chain" id="PRO_0000210710" description="Putative adhesin P1-like protein MPN_202">
    <location>
        <begin position="1"/>
        <end position="313"/>
    </location>
</feature>
<feature type="region of interest" description="Disordered" evidence="1">
    <location>
        <begin position="1"/>
        <end position="44"/>
    </location>
</feature>
<feature type="compositionally biased region" description="Low complexity" evidence="1">
    <location>
        <begin position="1"/>
        <end position="16"/>
    </location>
</feature>
<feature type="compositionally biased region" description="Polar residues" evidence="1">
    <location>
        <begin position="29"/>
        <end position="44"/>
    </location>
</feature>